<comment type="similarity">
    <text evidence="1">Belongs to the bacterial ribosomal protein bL32 family.</text>
</comment>
<feature type="chain" id="PRO_0000296426" description="Large ribosomal subunit protein bL32">
    <location>
        <begin position="1"/>
        <end position="61"/>
    </location>
</feature>
<feature type="region of interest" description="Disordered" evidence="2">
    <location>
        <begin position="1"/>
        <end position="61"/>
    </location>
</feature>
<feature type="compositionally biased region" description="Basic residues" evidence="2">
    <location>
        <begin position="1"/>
        <end position="16"/>
    </location>
</feature>
<feature type="compositionally biased region" description="Basic and acidic residues" evidence="2">
    <location>
        <begin position="28"/>
        <end position="44"/>
    </location>
</feature>
<dbReference type="EMBL" id="CP000524">
    <property type="protein sequence ID" value="ABM44470.1"/>
    <property type="molecule type" value="Genomic_DNA"/>
</dbReference>
<dbReference type="RefSeq" id="WP_005765887.1">
    <property type="nucleotide sequence ID" value="NC_008783.1"/>
</dbReference>
<dbReference type="SMR" id="A1UR57"/>
<dbReference type="STRING" id="360095.BARBAKC583_0122"/>
<dbReference type="GeneID" id="4684141"/>
<dbReference type="KEGG" id="bbk:BARBAKC583_0122"/>
<dbReference type="PATRIC" id="fig|360095.6.peg.121"/>
<dbReference type="eggNOG" id="COG0333">
    <property type="taxonomic scope" value="Bacteria"/>
</dbReference>
<dbReference type="HOGENOM" id="CLU_129084_2_2_5"/>
<dbReference type="OrthoDB" id="9801927at2"/>
<dbReference type="Proteomes" id="UP000000643">
    <property type="component" value="Chromosome"/>
</dbReference>
<dbReference type="GO" id="GO:0015934">
    <property type="term" value="C:large ribosomal subunit"/>
    <property type="evidence" value="ECO:0007669"/>
    <property type="project" value="InterPro"/>
</dbReference>
<dbReference type="GO" id="GO:0003735">
    <property type="term" value="F:structural constituent of ribosome"/>
    <property type="evidence" value="ECO:0007669"/>
    <property type="project" value="InterPro"/>
</dbReference>
<dbReference type="GO" id="GO:0006412">
    <property type="term" value="P:translation"/>
    <property type="evidence" value="ECO:0007669"/>
    <property type="project" value="UniProtKB-UniRule"/>
</dbReference>
<dbReference type="Gene3D" id="1.20.5.640">
    <property type="entry name" value="Single helix bin"/>
    <property type="match status" value="1"/>
</dbReference>
<dbReference type="HAMAP" id="MF_00340">
    <property type="entry name" value="Ribosomal_bL32"/>
    <property type="match status" value="1"/>
</dbReference>
<dbReference type="InterPro" id="IPR002677">
    <property type="entry name" value="Ribosomal_bL32"/>
</dbReference>
<dbReference type="InterPro" id="IPR044957">
    <property type="entry name" value="Ribosomal_bL32_bact"/>
</dbReference>
<dbReference type="InterPro" id="IPR011332">
    <property type="entry name" value="Ribosomal_zn-bd"/>
</dbReference>
<dbReference type="NCBIfam" id="TIGR01031">
    <property type="entry name" value="rpmF_bact"/>
    <property type="match status" value="1"/>
</dbReference>
<dbReference type="PANTHER" id="PTHR35534">
    <property type="entry name" value="50S RIBOSOMAL PROTEIN L32"/>
    <property type="match status" value="1"/>
</dbReference>
<dbReference type="PANTHER" id="PTHR35534:SF1">
    <property type="entry name" value="LARGE RIBOSOMAL SUBUNIT PROTEIN BL32"/>
    <property type="match status" value="1"/>
</dbReference>
<dbReference type="Pfam" id="PF01783">
    <property type="entry name" value="Ribosomal_L32p"/>
    <property type="match status" value="1"/>
</dbReference>
<dbReference type="SUPFAM" id="SSF57829">
    <property type="entry name" value="Zn-binding ribosomal proteins"/>
    <property type="match status" value="1"/>
</dbReference>
<protein>
    <recommendedName>
        <fullName evidence="1">Large ribosomal subunit protein bL32</fullName>
    </recommendedName>
    <alternativeName>
        <fullName evidence="3">50S ribosomal protein L32</fullName>
    </alternativeName>
</protein>
<reference key="1">
    <citation type="submission" date="2006-12" db="EMBL/GenBank/DDBJ databases">
        <authorList>
            <person name="Hendrix L."/>
            <person name="Mohamoud Y."/>
            <person name="Radune D."/>
            <person name="Shvartsbeyn A."/>
            <person name="Daugherty S."/>
            <person name="Dodson R."/>
            <person name="Durkin A.S."/>
            <person name="Harkins D."/>
            <person name="Huot H."/>
            <person name="Kothari S.P."/>
            <person name="Madupu R."/>
            <person name="Li J."/>
            <person name="Nelson W.C."/>
            <person name="Shrivastava S."/>
            <person name="Giglio M.G."/>
            <person name="Haft D."/>
            <person name="Selengut J."/>
            <person name="Fraser-Ligget C."/>
            <person name="Seshadri R."/>
        </authorList>
    </citation>
    <scope>NUCLEOTIDE SEQUENCE [LARGE SCALE GENOMIC DNA]</scope>
    <source>
        <strain>ATCC 35685 / KC583 / Herrer 020/F12,63</strain>
    </source>
</reference>
<keyword id="KW-0687">Ribonucleoprotein</keyword>
<keyword id="KW-0689">Ribosomal protein</keyword>
<organism>
    <name type="scientific">Bartonella bacilliformis (strain ATCC 35685 / KC583 / Herrer 020/F12,63)</name>
    <dbReference type="NCBI Taxonomy" id="360095"/>
    <lineage>
        <taxon>Bacteria</taxon>
        <taxon>Pseudomonadati</taxon>
        <taxon>Pseudomonadota</taxon>
        <taxon>Alphaproteobacteria</taxon>
        <taxon>Hyphomicrobiales</taxon>
        <taxon>Bartonellaceae</taxon>
        <taxon>Bartonella</taxon>
    </lineage>
</organism>
<accession>A1UR57</accession>
<gene>
    <name evidence="1" type="primary">rpmF</name>
    <name type="ordered locus">BARBAKC583_0122</name>
</gene>
<proteinExistence type="inferred from homology"/>
<name>RL32_BARBK</name>
<sequence>MAVPKRKTSPSKRGMRRSADALKAPTYVEDKDSGELRRPHHIDLKTGMYRGRSVLTPKNSG</sequence>
<evidence type="ECO:0000255" key="1">
    <source>
        <dbReference type="HAMAP-Rule" id="MF_00340"/>
    </source>
</evidence>
<evidence type="ECO:0000256" key="2">
    <source>
        <dbReference type="SAM" id="MobiDB-lite"/>
    </source>
</evidence>
<evidence type="ECO:0000305" key="3"/>